<proteinExistence type="inferred from homology"/>
<gene>
    <name evidence="1" type="primary">upp</name>
    <name type="ordered locus">Synpcc7942_1715</name>
</gene>
<evidence type="ECO:0000255" key="1">
    <source>
        <dbReference type="HAMAP-Rule" id="MF_01218"/>
    </source>
</evidence>
<organism>
    <name type="scientific">Synechococcus elongatus (strain ATCC 33912 / PCC 7942 / FACHB-805)</name>
    <name type="common">Anacystis nidulans R2</name>
    <dbReference type="NCBI Taxonomy" id="1140"/>
    <lineage>
        <taxon>Bacteria</taxon>
        <taxon>Bacillati</taxon>
        <taxon>Cyanobacteriota</taxon>
        <taxon>Cyanophyceae</taxon>
        <taxon>Synechococcales</taxon>
        <taxon>Synechococcaceae</taxon>
        <taxon>Synechococcus</taxon>
    </lineage>
</organism>
<reference key="1">
    <citation type="submission" date="2005-08" db="EMBL/GenBank/DDBJ databases">
        <title>Complete sequence of chromosome 1 of Synechococcus elongatus PCC 7942.</title>
        <authorList>
            <consortium name="US DOE Joint Genome Institute"/>
            <person name="Copeland A."/>
            <person name="Lucas S."/>
            <person name="Lapidus A."/>
            <person name="Barry K."/>
            <person name="Detter J.C."/>
            <person name="Glavina T."/>
            <person name="Hammon N."/>
            <person name="Israni S."/>
            <person name="Pitluck S."/>
            <person name="Schmutz J."/>
            <person name="Larimer F."/>
            <person name="Land M."/>
            <person name="Kyrpides N."/>
            <person name="Lykidis A."/>
            <person name="Golden S."/>
            <person name="Richardson P."/>
        </authorList>
    </citation>
    <scope>NUCLEOTIDE SEQUENCE [LARGE SCALE GENOMIC DNA]</scope>
    <source>
        <strain>ATCC 33912 / PCC 7942 / FACHB-805</strain>
    </source>
</reference>
<feature type="chain" id="PRO_1000053805" description="Uracil phosphoribosyltransferase">
    <location>
        <begin position="1"/>
        <end position="217"/>
    </location>
</feature>
<feature type="binding site" evidence="1">
    <location>
        <position position="84"/>
    </location>
    <ligand>
        <name>5-phospho-alpha-D-ribose 1-diphosphate</name>
        <dbReference type="ChEBI" id="CHEBI:58017"/>
    </ligand>
</feature>
<feature type="binding site" evidence="1">
    <location>
        <position position="109"/>
    </location>
    <ligand>
        <name>5-phospho-alpha-D-ribose 1-diphosphate</name>
        <dbReference type="ChEBI" id="CHEBI:58017"/>
    </ligand>
</feature>
<feature type="binding site" evidence="1">
    <location>
        <begin position="137"/>
        <end position="145"/>
    </location>
    <ligand>
        <name>5-phospho-alpha-D-ribose 1-diphosphate</name>
        <dbReference type="ChEBI" id="CHEBI:58017"/>
    </ligand>
</feature>
<feature type="binding site" evidence="1">
    <location>
        <position position="202"/>
    </location>
    <ligand>
        <name>uracil</name>
        <dbReference type="ChEBI" id="CHEBI:17568"/>
    </ligand>
</feature>
<feature type="binding site" evidence="1">
    <location>
        <begin position="207"/>
        <end position="209"/>
    </location>
    <ligand>
        <name>uracil</name>
        <dbReference type="ChEBI" id="CHEBI:17568"/>
    </ligand>
</feature>
<feature type="binding site" evidence="1">
    <location>
        <position position="208"/>
    </location>
    <ligand>
        <name>5-phospho-alpha-D-ribose 1-diphosphate</name>
        <dbReference type="ChEBI" id="CHEBI:58017"/>
    </ligand>
</feature>
<sequence length="217" mass="23903">MAPQLRIFVPPHPLIRHWLGIARDRQTPTPLFRTAIAELGRWLAYEAVREWLPTIPAAVQTPLAETPAEFVDFSQPLAIVPILRAGLGLVESVQQVLPTARIFHVGLKRDEVSLEPRCYLNHLPEQLEVNSRVLVLDPMLATGGSLLYTLDLLRDRGVSAEQVRVLSIVAAPPALQKLSQAYPALTIYSAIIDEQLNDKGFIVPGLGDAGDRLFGTP</sequence>
<comment type="function">
    <text evidence="1">Catalyzes the conversion of uracil and 5-phospho-alpha-D-ribose 1-diphosphate (PRPP) to UMP and diphosphate.</text>
</comment>
<comment type="catalytic activity">
    <reaction evidence="1">
        <text>UMP + diphosphate = 5-phospho-alpha-D-ribose 1-diphosphate + uracil</text>
        <dbReference type="Rhea" id="RHEA:13017"/>
        <dbReference type="ChEBI" id="CHEBI:17568"/>
        <dbReference type="ChEBI" id="CHEBI:33019"/>
        <dbReference type="ChEBI" id="CHEBI:57865"/>
        <dbReference type="ChEBI" id="CHEBI:58017"/>
        <dbReference type="EC" id="2.4.2.9"/>
    </reaction>
</comment>
<comment type="cofactor">
    <cofactor evidence="1">
        <name>Mg(2+)</name>
        <dbReference type="ChEBI" id="CHEBI:18420"/>
    </cofactor>
    <text evidence="1">Binds 1 Mg(2+) ion per subunit. The magnesium is bound as Mg-PRPP.</text>
</comment>
<comment type="activity regulation">
    <text evidence="1">Allosterically activated by GTP.</text>
</comment>
<comment type="pathway">
    <text evidence="1">Pyrimidine metabolism; UMP biosynthesis via salvage pathway; UMP from uracil: step 1/1.</text>
</comment>
<comment type="similarity">
    <text evidence="1">Belongs to the UPRTase family.</text>
</comment>
<accession>Q31MH4</accession>
<name>UPP_SYNE7</name>
<dbReference type="EC" id="2.4.2.9" evidence="1"/>
<dbReference type="EMBL" id="CP000100">
    <property type="protein sequence ID" value="ABB57745.1"/>
    <property type="molecule type" value="Genomic_DNA"/>
</dbReference>
<dbReference type="RefSeq" id="WP_011244686.1">
    <property type="nucleotide sequence ID" value="NZ_JACJTX010000001.1"/>
</dbReference>
<dbReference type="SMR" id="Q31MH4"/>
<dbReference type="STRING" id="1140.Synpcc7942_1715"/>
<dbReference type="PaxDb" id="1140-Synpcc7942_1715"/>
<dbReference type="GeneID" id="72430585"/>
<dbReference type="KEGG" id="syf:Synpcc7942_1715"/>
<dbReference type="eggNOG" id="COG0035">
    <property type="taxonomic scope" value="Bacteria"/>
</dbReference>
<dbReference type="HOGENOM" id="CLU_067096_2_1_3"/>
<dbReference type="OrthoDB" id="9781675at2"/>
<dbReference type="BioCyc" id="SYNEL:SYNPCC7942_1715-MONOMER"/>
<dbReference type="UniPathway" id="UPA00574">
    <property type="reaction ID" value="UER00636"/>
</dbReference>
<dbReference type="Proteomes" id="UP000889800">
    <property type="component" value="Chromosome"/>
</dbReference>
<dbReference type="GO" id="GO:0005525">
    <property type="term" value="F:GTP binding"/>
    <property type="evidence" value="ECO:0007669"/>
    <property type="project" value="UniProtKB-KW"/>
</dbReference>
<dbReference type="GO" id="GO:0000287">
    <property type="term" value="F:magnesium ion binding"/>
    <property type="evidence" value="ECO:0007669"/>
    <property type="project" value="UniProtKB-UniRule"/>
</dbReference>
<dbReference type="GO" id="GO:0004845">
    <property type="term" value="F:uracil phosphoribosyltransferase activity"/>
    <property type="evidence" value="ECO:0007669"/>
    <property type="project" value="UniProtKB-UniRule"/>
</dbReference>
<dbReference type="GO" id="GO:0044206">
    <property type="term" value="P:UMP salvage"/>
    <property type="evidence" value="ECO:0007669"/>
    <property type="project" value="UniProtKB-UniRule"/>
</dbReference>
<dbReference type="GO" id="GO:0006223">
    <property type="term" value="P:uracil salvage"/>
    <property type="evidence" value="ECO:0007669"/>
    <property type="project" value="InterPro"/>
</dbReference>
<dbReference type="CDD" id="cd06223">
    <property type="entry name" value="PRTases_typeI"/>
    <property type="match status" value="1"/>
</dbReference>
<dbReference type="FunFam" id="3.40.50.2020:FF:000003">
    <property type="entry name" value="Uracil phosphoribosyltransferase"/>
    <property type="match status" value="1"/>
</dbReference>
<dbReference type="Gene3D" id="3.40.50.2020">
    <property type="match status" value="1"/>
</dbReference>
<dbReference type="HAMAP" id="MF_01218_B">
    <property type="entry name" value="Upp_B"/>
    <property type="match status" value="1"/>
</dbReference>
<dbReference type="InterPro" id="IPR000836">
    <property type="entry name" value="PRibTrfase_dom"/>
</dbReference>
<dbReference type="InterPro" id="IPR029057">
    <property type="entry name" value="PRTase-like"/>
</dbReference>
<dbReference type="InterPro" id="IPR034332">
    <property type="entry name" value="Upp_B"/>
</dbReference>
<dbReference type="InterPro" id="IPR050054">
    <property type="entry name" value="UPRTase/APRTase"/>
</dbReference>
<dbReference type="InterPro" id="IPR005765">
    <property type="entry name" value="Ura_phspho_trans"/>
</dbReference>
<dbReference type="NCBIfam" id="NF001097">
    <property type="entry name" value="PRK00129.1"/>
    <property type="match status" value="1"/>
</dbReference>
<dbReference type="NCBIfam" id="TIGR01091">
    <property type="entry name" value="upp"/>
    <property type="match status" value="1"/>
</dbReference>
<dbReference type="PANTHER" id="PTHR32315">
    <property type="entry name" value="ADENINE PHOSPHORIBOSYLTRANSFERASE"/>
    <property type="match status" value="1"/>
</dbReference>
<dbReference type="PANTHER" id="PTHR32315:SF4">
    <property type="entry name" value="URACIL PHOSPHORIBOSYLTRANSFERASE, CHLOROPLASTIC"/>
    <property type="match status" value="1"/>
</dbReference>
<dbReference type="Pfam" id="PF14681">
    <property type="entry name" value="UPRTase"/>
    <property type="match status" value="1"/>
</dbReference>
<dbReference type="SUPFAM" id="SSF53271">
    <property type="entry name" value="PRTase-like"/>
    <property type="match status" value="1"/>
</dbReference>
<protein>
    <recommendedName>
        <fullName evidence="1">Uracil phosphoribosyltransferase</fullName>
        <ecNumber evidence="1">2.4.2.9</ecNumber>
    </recommendedName>
    <alternativeName>
        <fullName evidence="1">UMP pyrophosphorylase</fullName>
    </alternativeName>
    <alternativeName>
        <fullName evidence="1">UPRTase</fullName>
    </alternativeName>
</protein>
<keyword id="KW-0021">Allosteric enzyme</keyword>
<keyword id="KW-0328">Glycosyltransferase</keyword>
<keyword id="KW-0342">GTP-binding</keyword>
<keyword id="KW-0460">Magnesium</keyword>
<keyword id="KW-0547">Nucleotide-binding</keyword>
<keyword id="KW-1185">Reference proteome</keyword>
<keyword id="KW-0808">Transferase</keyword>